<accession>P27190</accession>
<accession>P27185</accession>
<accession>P27191</accession>
<dbReference type="EC" id="2.7.7.-"/>
<dbReference type="EMBL" id="X59794">
    <property type="protein sequence ID" value="CAA42460.1"/>
    <property type="molecule type" value="Genomic_DNA"/>
</dbReference>
<dbReference type="EMBL" id="U67194">
    <property type="protein sequence ID" value="AAC64468.1"/>
    <property type="molecule type" value="Genomic_DNA"/>
</dbReference>
<dbReference type="PIR" id="S37669">
    <property type="entry name" value="S37669"/>
</dbReference>
<dbReference type="RefSeq" id="WP_006122509.1">
    <property type="nucleotide sequence ID" value="NZ_MW574946.1"/>
</dbReference>
<dbReference type="SMR" id="P27190"/>
<dbReference type="GO" id="GO:0000428">
    <property type="term" value="C:DNA-directed RNA polymerase complex"/>
    <property type="evidence" value="ECO:0007669"/>
    <property type="project" value="UniProtKB-KW"/>
</dbReference>
<dbReference type="GO" id="GO:0016779">
    <property type="term" value="F:nucleotidyltransferase activity"/>
    <property type="evidence" value="ECO:0007669"/>
    <property type="project" value="UniProtKB-KW"/>
</dbReference>
<dbReference type="GO" id="GO:0003697">
    <property type="term" value="F:single-stranded DNA binding"/>
    <property type="evidence" value="ECO:0007669"/>
    <property type="project" value="InterPro"/>
</dbReference>
<dbReference type="GO" id="GO:0006260">
    <property type="term" value="P:DNA replication"/>
    <property type="evidence" value="ECO:0007669"/>
    <property type="project" value="UniProtKB-KW"/>
</dbReference>
<dbReference type="CDD" id="cd01029">
    <property type="entry name" value="TOPRIM_primases"/>
    <property type="match status" value="1"/>
</dbReference>
<dbReference type="InterPro" id="IPR013610">
    <property type="entry name" value="ArdC_N"/>
</dbReference>
<dbReference type="InterPro" id="IPR043764">
    <property type="entry name" value="DUF5710"/>
</dbReference>
<dbReference type="InterPro" id="IPR041459">
    <property type="entry name" value="MPTase-PolyVal"/>
</dbReference>
<dbReference type="InterPro" id="IPR034154">
    <property type="entry name" value="TOPRIM_DnaG/twinkle"/>
</dbReference>
<dbReference type="InterPro" id="IPR006171">
    <property type="entry name" value="TOPRIM_dom"/>
</dbReference>
<dbReference type="Pfam" id="PF08401">
    <property type="entry name" value="ArdcN"/>
    <property type="match status" value="1"/>
</dbReference>
<dbReference type="Pfam" id="PF18974">
    <property type="entry name" value="DUF5710"/>
    <property type="match status" value="2"/>
</dbReference>
<dbReference type="Pfam" id="PF18818">
    <property type="entry name" value="MPTase-PolyVal"/>
    <property type="match status" value="1"/>
</dbReference>
<dbReference type="Pfam" id="PF13362">
    <property type="entry name" value="Toprim_3"/>
    <property type="match status" value="1"/>
</dbReference>
<dbReference type="SMART" id="SM00493">
    <property type="entry name" value="TOPRIM"/>
    <property type="match status" value="1"/>
</dbReference>
<dbReference type="PROSITE" id="PS50880">
    <property type="entry name" value="TOPRIM"/>
    <property type="match status" value="1"/>
</dbReference>
<feature type="chain" id="PRO_0000007253" description="DNA primase TraC">
    <location>
        <begin position="1"/>
        <end position="1448"/>
    </location>
</feature>
<feature type="domain" description="Toprim" evidence="1">
    <location>
        <begin position="1237"/>
        <end position="1325"/>
    </location>
</feature>
<feature type="region of interest" description="Disordered" evidence="2">
    <location>
        <begin position="844"/>
        <end position="915"/>
    </location>
</feature>
<feature type="region of interest" description="Disordered" evidence="2">
    <location>
        <begin position="952"/>
        <end position="982"/>
    </location>
</feature>
<feature type="region of interest" description="Disordered" evidence="2">
    <location>
        <begin position="1414"/>
        <end position="1448"/>
    </location>
</feature>
<feature type="compositionally biased region" description="Basic and acidic residues" evidence="2">
    <location>
        <begin position="844"/>
        <end position="856"/>
    </location>
</feature>
<feature type="compositionally biased region" description="Basic and acidic residues" evidence="2">
    <location>
        <begin position="863"/>
        <end position="872"/>
    </location>
</feature>
<feature type="compositionally biased region" description="Basic and acidic residues" evidence="2">
    <location>
        <begin position="882"/>
        <end position="898"/>
    </location>
</feature>
<feature type="compositionally biased region" description="Low complexity" evidence="2">
    <location>
        <begin position="964"/>
        <end position="982"/>
    </location>
</feature>
<feature type="compositionally biased region" description="Basic and acidic residues" evidence="2">
    <location>
        <begin position="1418"/>
        <end position="1441"/>
    </location>
</feature>
<feature type="splice variant" id="VSP_018718" description="In isoform TraC-4." evidence="3">
    <location>
        <begin position="1"/>
        <end position="701"/>
    </location>
</feature>
<feature type="splice variant" id="VSP_018717" description="In isoform TraC-3." evidence="3">
    <location>
        <begin position="1"/>
        <end position="218"/>
    </location>
</feature>
<evidence type="ECO:0000255" key="1">
    <source>
        <dbReference type="PROSITE-ProRule" id="PRU00995"/>
    </source>
</evidence>
<evidence type="ECO:0000256" key="2">
    <source>
        <dbReference type="SAM" id="MobiDB-lite"/>
    </source>
</evidence>
<evidence type="ECO:0000305" key="3"/>
<reference key="1">
    <citation type="journal article" date="1991" name="DNA Seq.">
        <title>Gene organization and nucleotide sequence of the primase region of IncP plasmids RP4 and R751.</title>
        <authorList>
            <person name="Miele L."/>
            <person name="Strack B."/>
            <person name="Kruft V."/>
            <person name="Lanka E."/>
        </authorList>
    </citation>
    <scope>NUCLEOTIDE SEQUENCE [GENOMIC DNA]</scope>
    <scope>PROTEIN SEQUENCE OF 2-11; 219-234 AND 702-714</scope>
    <source>
        <strain>ATCC 33694 / HB101</strain>
    </source>
</reference>
<reference key="2">
    <citation type="submission" date="1996-08" db="EMBL/GenBank/DDBJ databases">
        <authorList>
            <person name="Thomas C.M."/>
        </authorList>
    </citation>
    <scope>NUCLEOTIDE SEQUENCE [GENOMIC DNA]</scope>
</reference>
<protein>
    <recommendedName>
        <fullName>DNA primase TraC</fullName>
        <ecNumber>2.7.7.-</ecNumber>
    </recommendedName>
    <alternativeName>
        <fullName>Replication primase</fullName>
    </alternativeName>
</protein>
<organism>
    <name type="scientific">Escherichia coli</name>
    <dbReference type="NCBI Taxonomy" id="562"/>
    <lineage>
        <taxon>Bacteria</taxon>
        <taxon>Pseudomonadati</taxon>
        <taxon>Pseudomonadota</taxon>
        <taxon>Gammaproteobacteria</taxon>
        <taxon>Enterobacterales</taxon>
        <taxon>Enterobacteriaceae</taxon>
        <taxon>Escherichia</taxon>
    </lineage>
</organism>
<gene>
    <name type="primary">traC</name>
</gene>
<geneLocation type="plasmid">
    <name>IncP-beta R751</name>
</geneLocation>
<comment type="function">
    <text>Required for autonomous replication in E.coli. Transferred into the recipient cell during bacterial conjugation. Catalyzes the synthesis of short oligoribonucleotide primers with CpA or pCpA at their 5'-termini on a single-stranded template DNA.</text>
</comment>
<comment type="alternative products">
    <event type="alternative initiation"/>
    <isoform>
        <id>P27190-1</id>
        <name>TraC-2</name>
        <sequence type="displayed"/>
    </isoform>
    <isoform>
        <id>P27190-2</id>
        <name>TraC-3</name>
        <sequence type="described" ref="VSP_018717"/>
    </isoform>
    <isoform>
        <id>P27190-3</id>
        <name>TraC-4</name>
        <sequence type="described" ref="VSP_018718"/>
    </isoform>
</comment>
<proteinExistence type="evidence at protein level"/>
<name>TRAC5_ECOLX</name>
<keyword id="KW-0024">Alternative initiation</keyword>
<keyword id="KW-0903">Direct protein sequencing</keyword>
<keyword id="KW-0235">DNA replication</keyword>
<keyword id="KW-0240">DNA-directed RNA polymerase</keyword>
<keyword id="KW-0548">Nucleotidyltransferase</keyword>
<keyword id="KW-0614">Plasmid</keyword>
<keyword id="KW-0804">Transcription</keyword>
<keyword id="KW-0808">Transferase</keyword>
<sequence length="1448" mass="158951">MPITKAEAQGVTRAFVRDYPGALELAYKFREDAAELYGPRAAEVPADMKGGYVPKETLHAGRAYRGRVDVPLQNVESASDLLMTLRHEVLGHYGANTFAPGEKRALLDGLAAARNEPTLKPLWDDVNRRYAGQSLDVRAEEVFALHCEGIEPSQHQVADQVQQRGQQSFTETCIARVRPMQADDLHNIVCMVAQGLRDRSRTQQNFPQFNELFRRDENMEPKKPFHEVVAEKLIEQLKAGTAPWQKPWEPGEPNAYLPMNPTTGKRYKGINAIHLMAQGRSDARWMTYKQAAAVGAQVRKGEKGTPVQYWKFSEEQDKLDDSGRPVLDAKGQPVKETVMLERPRVFFATVFNGEQIDGLPPLQPKKEQTWNAVERAEHILKASGATITHAAGDRAFYRPSTDSITLPERGQFPSSDRYYATALHELGHWTGHASRLDRDLAHPFGSEGYAKEELRAEIASMIVGDELGIGHDPGQHAAYVGSWIKALQDEPLEVFRAAADAEKIHDYVLAFEQKQVQEQDQQQSQAQDEAVAQALAVDIAEVLDNPDVSFSHYQAFQGDTLEDALRSRGLETVGSITGTDPEQFYAVAHDRLSPVFGIDPSHTDTDNAYLERKGLAQEFANMAEQLHLAQQLQQHGEQIVSSIDAEARWSDGQRIFAFHDQDGEPHQVRSLDELNNYAPDQLMALPALTQQQAAVADQEANMTPPTIDQAAALLAAHPADAVQGIEQAAAARRQLAAGEIDGQAFADATRQHLGVELPPDWSGELRIVGVAEQDGQTVDAAQAGIEPQAFQVYARKADAQFGEDAFAFVAGTRTEGQAEALAERLHLVDALGTDNQHERAAKLARVQEERVRRDPNATEEDISAAKEARKTAEASAMLNDSDAQRRAAELERQERDRQQAQPQAEKPERQYINVPYKEKDEAKSLGARWDRQQQSWYVPPGTDAAPFAKWAQGAATAAVEPRSAQPAPEAQGEAQKPAQQAQQARQYLAVPYEQRNAAKAAGALWDKAAKSWYVGPRADAAKLERWKPENVQAQQGPAMTPREEFAEAMRSAGLFTGSNAQGDHPIMDGKRHRVPVEGGKKGALDGFYVGHLDGHPAGRIINNKTGTDITWKSKGYALSDQEKAKLQAEAAEKLAQRAVEQDKAQEATAQRVGRQMADLVPIEQPTPYLQAKGIQAQAGVMTDREGQKTYIPAFDAEGKQWTMQYIQEDGTKRFAKDSKKEGCFHPVGGMDALAAAPALVISEGYATAAQVAEAVGHATVAAFDSGNLEAVAKALHAKFPDKPVIIAGDDDRHLVMTHGNNPGREKAEAAAQAVGGKAIFPIFAPAENTYPRDLPAITPDSFKTHLRAEQRLADAAAGKVELAGDEAAKLKASMLSGAQIAALSTMKQHTDFNDLAHKSELGIEGVKRQIGAAISQVQRDEQQHQEQKHVEKKQQQIEQRPRRAARIG</sequence>